<feature type="chain" id="PRO_0000269779" description="Histone-lysine N-methyltransferase, H3 lysine-36 specific">
    <location>
        <begin position="1"/>
        <end position="684"/>
    </location>
</feature>
<feature type="domain" description="AWS" evidence="6">
    <location>
        <begin position="53"/>
        <end position="108"/>
    </location>
</feature>
<feature type="domain" description="SET" evidence="5">
    <location>
        <begin position="110"/>
        <end position="227"/>
    </location>
</feature>
<feature type="domain" description="Post-SET" evidence="4">
    <location>
        <begin position="234"/>
        <end position="250"/>
    </location>
</feature>
<feature type="domain" description="WW">
    <location>
        <begin position="452"/>
        <end position="484"/>
    </location>
</feature>
<feature type="region of interest" description="Disordered" evidence="8">
    <location>
        <begin position="479"/>
        <end position="521"/>
    </location>
</feature>
<feature type="region of interest" description="Disordered" evidence="8">
    <location>
        <begin position="568"/>
        <end position="595"/>
    </location>
</feature>
<feature type="coiled-coil region" evidence="3">
    <location>
        <begin position="518"/>
        <end position="594"/>
    </location>
</feature>
<feature type="compositionally biased region" description="Basic and acidic residues" evidence="8">
    <location>
        <begin position="506"/>
        <end position="521"/>
    </location>
</feature>
<feature type="compositionally biased region" description="Basic and acidic residues" evidence="8">
    <location>
        <begin position="568"/>
        <end position="586"/>
    </location>
</feature>
<comment type="function">
    <text evidence="2">Histone methyltransferase that trimethylates histone H3 'Lys-36' forming H3K36me3. Involved in transcription elongation as well as in transcription repression.</text>
</comment>
<comment type="catalytic activity">
    <reaction evidence="2 7">
        <text>L-lysyl(36)-[histone H3] + 3 S-adenosyl-L-methionine = N(6),N(6),N(6)-trimethyl-L-lysyl(36)-[histone H3] + 3 S-adenosyl-L-homocysteine + 3 H(+)</text>
        <dbReference type="Rhea" id="RHEA:60324"/>
        <dbReference type="Rhea" id="RHEA-COMP:9785"/>
        <dbReference type="Rhea" id="RHEA-COMP:15536"/>
        <dbReference type="ChEBI" id="CHEBI:15378"/>
        <dbReference type="ChEBI" id="CHEBI:29969"/>
        <dbReference type="ChEBI" id="CHEBI:57856"/>
        <dbReference type="ChEBI" id="CHEBI:59789"/>
        <dbReference type="ChEBI" id="CHEBI:61961"/>
        <dbReference type="EC" id="2.1.1.359"/>
    </reaction>
</comment>
<comment type="subcellular location">
    <subcellularLocation>
        <location evidence="1">Nucleus</location>
    </subcellularLocation>
    <subcellularLocation>
        <location evidence="1">Chromosome</location>
    </subcellularLocation>
</comment>
<comment type="domain">
    <text evidence="1">The AWS and SET domains are necessary for transcription repression.</text>
</comment>
<comment type="similarity">
    <text evidence="7">Belongs to the class V-like SAM-binding methyltransferase superfamily. Histone-lysine methyltransferase family. SET2 subfamily.</text>
</comment>
<evidence type="ECO:0000250" key="1"/>
<evidence type="ECO:0000250" key="2">
    <source>
        <dbReference type="UniProtKB" id="P46995"/>
    </source>
</evidence>
<evidence type="ECO:0000255" key="3"/>
<evidence type="ECO:0000255" key="4">
    <source>
        <dbReference type="PROSITE-ProRule" id="PRU00155"/>
    </source>
</evidence>
<evidence type="ECO:0000255" key="5">
    <source>
        <dbReference type="PROSITE-ProRule" id="PRU00190"/>
    </source>
</evidence>
<evidence type="ECO:0000255" key="6">
    <source>
        <dbReference type="PROSITE-ProRule" id="PRU00562"/>
    </source>
</evidence>
<evidence type="ECO:0000255" key="7">
    <source>
        <dbReference type="PROSITE-ProRule" id="PRU00901"/>
    </source>
</evidence>
<evidence type="ECO:0000256" key="8">
    <source>
        <dbReference type="SAM" id="MobiDB-lite"/>
    </source>
</evidence>
<gene>
    <name type="primary">SET2</name>
    <name type="ordered locus">AEL128C</name>
</gene>
<sequence>MSRSSSPSVSLPLPSSATLFLDREDKTEEALGTFIELEQCTYTHKRLGDSRSNEFMECDCFEDYKDEQNHACDENSDCINRLTLIECVNDLCTSCGDDCQNQRFQKKEYADIAVFQTEKKGYGVRAERDIEANEFIYEYIGEVISEADFRDRMVDYDMRGFKHFYFMMLQAGEFIDATERGCLARFCNHSCNPNAYVSKWDVAGKLKMGIFAHRKILKGEEITFDYNVDRYGATAQPCYCDEPNCIGFLGGKTQTDAASLLPQNYADALGVRPSVEKKWVKMRKALGEEIDKSGSSNINIEFVESLELEPCVQYSDVNKVMSVLLQIDDKFICSKLLERILLTSDETMRYQIIKLHGYKCFSKLLGLFETDENTQHRILQYLSDLPKTTKNGIVSSQIDKKVESLLQKEALKEDASALLERWNTYETYQRIAKKDFTKTSNGLNKVTDFRRVRLPLGWEIIHENGRPMYYNAQRQIKRVDPPSDTHLQRPARTTPPQRYNGGFYDRTTKRPLDPESFEKRKRQRLEWEQQELAKKKQEEVRHLKEKLEVEKQKKSELEQIIEDANKQQEQQRLERLQKEKETAERRERRRQTHSASRIEHKWNKFFAQIVPNLIKSYATSMDRARIKECARDIVKILSSKELKKDATKVPPAEVTKEKRKKVNEFCKSYMDKLLAKMHEKAVSK</sequence>
<name>SET2_EREGS</name>
<protein>
    <recommendedName>
        <fullName>Histone-lysine N-methyltransferase, H3 lysine-36 specific</fullName>
        <ecNumber evidence="2">2.1.1.359</ecNumber>
    </recommendedName>
    <alternativeName>
        <fullName>SET domain-containing protein 2</fullName>
    </alternativeName>
</protein>
<accession>Q757Y8</accession>
<organism>
    <name type="scientific">Eremothecium gossypii (strain ATCC 10895 / CBS 109.51 / FGSC 9923 / NRRL Y-1056)</name>
    <name type="common">Yeast</name>
    <name type="synonym">Ashbya gossypii</name>
    <dbReference type="NCBI Taxonomy" id="284811"/>
    <lineage>
        <taxon>Eukaryota</taxon>
        <taxon>Fungi</taxon>
        <taxon>Dikarya</taxon>
        <taxon>Ascomycota</taxon>
        <taxon>Saccharomycotina</taxon>
        <taxon>Saccharomycetes</taxon>
        <taxon>Saccharomycetales</taxon>
        <taxon>Saccharomycetaceae</taxon>
        <taxon>Eremothecium</taxon>
    </lineage>
</organism>
<proteinExistence type="inferred from homology"/>
<dbReference type="EC" id="2.1.1.359" evidence="2"/>
<dbReference type="EMBL" id="AE016818">
    <property type="protein sequence ID" value="AAS52557.2"/>
    <property type="molecule type" value="Genomic_DNA"/>
</dbReference>
<dbReference type="RefSeq" id="NP_984733.2">
    <property type="nucleotide sequence ID" value="NM_210087.2"/>
</dbReference>
<dbReference type="SMR" id="Q757Y8"/>
<dbReference type="FunCoup" id="Q757Y8">
    <property type="interactions" value="149"/>
</dbReference>
<dbReference type="STRING" id="284811.Q757Y8"/>
<dbReference type="EnsemblFungi" id="AAS52557">
    <property type="protein sequence ID" value="AAS52557"/>
    <property type="gene ID" value="AGOS_AEL128C"/>
</dbReference>
<dbReference type="GeneID" id="4620920"/>
<dbReference type="KEGG" id="ago:AGOS_AEL128C"/>
<dbReference type="eggNOG" id="KOG4442">
    <property type="taxonomic scope" value="Eukaryota"/>
</dbReference>
<dbReference type="HOGENOM" id="CLU_008492_1_1_1"/>
<dbReference type="InParanoid" id="Q757Y8"/>
<dbReference type="OMA" id="AQSQPCY"/>
<dbReference type="OrthoDB" id="422362at2759"/>
<dbReference type="Proteomes" id="UP000000591">
    <property type="component" value="Chromosome V"/>
</dbReference>
<dbReference type="GO" id="GO:0000785">
    <property type="term" value="C:chromatin"/>
    <property type="evidence" value="ECO:0000318"/>
    <property type="project" value="GO_Central"/>
</dbReference>
<dbReference type="GO" id="GO:0005829">
    <property type="term" value="C:cytosol"/>
    <property type="evidence" value="ECO:0007669"/>
    <property type="project" value="EnsemblFungi"/>
</dbReference>
<dbReference type="GO" id="GO:0005634">
    <property type="term" value="C:nucleus"/>
    <property type="evidence" value="ECO:0000318"/>
    <property type="project" value="GO_Central"/>
</dbReference>
<dbReference type="GO" id="GO:0046975">
    <property type="term" value="F:histone H3K36 methyltransferase activity"/>
    <property type="evidence" value="ECO:0000318"/>
    <property type="project" value="GO_Central"/>
</dbReference>
<dbReference type="GO" id="GO:0140955">
    <property type="term" value="F:histone H3K36 trimethyltransferase activity"/>
    <property type="evidence" value="ECO:0007669"/>
    <property type="project" value="UniProtKB-EC"/>
</dbReference>
<dbReference type="GO" id="GO:0003723">
    <property type="term" value="F:RNA binding"/>
    <property type="evidence" value="ECO:0007669"/>
    <property type="project" value="EnsemblFungi"/>
</dbReference>
<dbReference type="GO" id="GO:0030437">
    <property type="term" value="P:ascospore formation"/>
    <property type="evidence" value="ECO:0007669"/>
    <property type="project" value="EnsemblFungi"/>
</dbReference>
<dbReference type="GO" id="GO:0006354">
    <property type="term" value="P:DNA-templated transcription elongation"/>
    <property type="evidence" value="ECO:0007669"/>
    <property type="project" value="EnsemblFungi"/>
</dbReference>
<dbReference type="GO" id="GO:0006353">
    <property type="term" value="P:DNA-templated transcription termination"/>
    <property type="evidence" value="ECO:0007669"/>
    <property type="project" value="EnsemblFungi"/>
</dbReference>
<dbReference type="GO" id="GO:0032259">
    <property type="term" value="P:methylation"/>
    <property type="evidence" value="ECO:0007669"/>
    <property type="project" value="UniProtKB-KW"/>
</dbReference>
<dbReference type="GO" id="GO:0060195">
    <property type="term" value="P:negative regulation of antisense RNA transcription"/>
    <property type="evidence" value="ECO:0007669"/>
    <property type="project" value="EnsemblFungi"/>
</dbReference>
<dbReference type="GO" id="GO:0045128">
    <property type="term" value="P:negative regulation of reciprocal meiotic recombination"/>
    <property type="evidence" value="ECO:0007669"/>
    <property type="project" value="EnsemblFungi"/>
</dbReference>
<dbReference type="GO" id="GO:0030174">
    <property type="term" value="P:regulation of DNA-templated DNA replication initiation"/>
    <property type="evidence" value="ECO:0007669"/>
    <property type="project" value="EnsemblFungi"/>
</dbReference>
<dbReference type="GO" id="GO:0006355">
    <property type="term" value="P:regulation of DNA-templated transcription"/>
    <property type="evidence" value="ECO:0000318"/>
    <property type="project" value="GO_Central"/>
</dbReference>
<dbReference type="GO" id="GO:0009302">
    <property type="term" value="P:sno(s)RNA transcription"/>
    <property type="evidence" value="ECO:0007669"/>
    <property type="project" value="EnsemblFungi"/>
</dbReference>
<dbReference type="GO" id="GO:0006283">
    <property type="term" value="P:transcription-coupled nucleotide-excision repair"/>
    <property type="evidence" value="ECO:0007669"/>
    <property type="project" value="EnsemblFungi"/>
</dbReference>
<dbReference type="FunFam" id="2.170.270.10:FF:000033">
    <property type="entry name" value="Histone-lysine N-methyltransferase"/>
    <property type="match status" value="1"/>
</dbReference>
<dbReference type="Gene3D" id="2.170.270.10">
    <property type="entry name" value="SET domain"/>
    <property type="match status" value="1"/>
</dbReference>
<dbReference type="Gene3D" id="1.10.1740.100">
    <property type="entry name" value="Set2, Rpb1 interacting domain"/>
    <property type="match status" value="1"/>
</dbReference>
<dbReference type="InterPro" id="IPR006560">
    <property type="entry name" value="AWS_dom"/>
</dbReference>
<dbReference type="InterPro" id="IPR003616">
    <property type="entry name" value="Post-SET_dom"/>
</dbReference>
<dbReference type="InterPro" id="IPR025788">
    <property type="entry name" value="Set2_fungi"/>
</dbReference>
<dbReference type="InterPro" id="IPR050777">
    <property type="entry name" value="SET2_Histone-Lys_MeTrsfase"/>
</dbReference>
<dbReference type="InterPro" id="IPR001214">
    <property type="entry name" value="SET_dom"/>
</dbReference>
<dbReference type="InterPro" id="IPR046341">
    <property type="entry name" value="SET_dom_sf"/>
</dbReference>
<dbReference type="InterPro" id="IPR013257">
    <property type="entry name" value="SRI"/>
</dbReference>
<dbReference type="InterPro" id="IPR038190">
    <property type="entry name" value="SRI_sf"/>
</dbReference>
<dbReference type="InterPro" id="IPR001202">
    <property type="entry name" value="WW_dom"/>
</dbReference>
<dbReference type="InterPro" id="IPR036020">
    <property type="entry name" value="WW_dom_sf"/>
</dbReference>
<dbReference type="PANTHER" id="PTHR22884">
    <property type="entry name" value="SET DOMAIN PROTEINS"/>
    <property type="match status" value="1"/>
</dbReference>
<dbReference type="Pfam" id="PF17907">
    <property type="entry name" value="AWS"/>
    <property type="match status" value="1"/>
</dbReference>
<dbReference type="Pfam" id="PF00856">
    <property type="entry name" value="SET"/>
    <property type="match status" value="1"/>
</dbReference>
<dbReference type="Pfam" id="PF08236">
    <property type="entry name" value="SRI"/>
    <property type="match status" value="1"/>
</dbReference>
<dbReference type="Pfam" id="PF18507">
    <property type="entry name" value="WW_1"/>
    <property type="match status" value="1"/>
</dbReference>
<dbReference type="SMART" id="SM00570">
    <property type="entry name" value="AWS"/>
    <property type="match status" value="1"/>
</dbReference>
<dbReference type="SMART" id="SM00508">
    <property type="entry name" value="PostSET"/>
    <property type="match status" value="1"/>
</dbReference>
<dbReference type="SMART" id="SM00317">
    <property type="entry name" value="SET"/>
    <property type="match status" value="1"/>
</dbReference>
<dbReference type="SUPFAM" id="SSF82199">
    <property type="entry name" value="SET domain"/>
    <property type="match status" value="1"/>
</dbReference>
<dbReference type="SUPFAM" id="SSF51045">
    <property type="entry name" value="WW domain"/>
    <property type="match status" value="1"/>
</dbReference>
<dbReference type="PROSITE" id="PS51215">
    <property type="entry name" value="AWS"/>
    <property type="match status" value="1"/>
</dbReference>
<dbReference type="PROSITE" id="PS50868">
    <property type="entry name" value="POST_SET"/>
    <property type="match status" value="1"/>
</dbReference>
<dbReference type="PROSITE" id="PS51568">
    <property type="entry name" value="SAM_MT43_SET2_1"/>
    <property type="match status" value="1"/>
</dbReference>
<dbReference type="PROSITE" id="PS50280">
    <property type="entry name" value="SET"/>
    <property type="match status" value="1"/>
</dbReference>
<keyword id="KW-0158">Chromosome</keyword>
<keyword id="KW-0175">Coiled coil</keyword>
<keyword id="KW-0489">Methyltransferase</keyword>
<keyword id="KW-0539">Nucleus</keyword>
<keyword id="KW-1185">Reference proteome</keyword>
<keyword id="KW-0678">Repressor</keyword>
<keyword id="KW-0949">S-adenosyl-L-methionine</keyword>
<keyword id="KW-0804">Transcription</keyword>
<keyword id="KW-0805">Transcription regulation</keyword>
<keyword id="KW-0808">Transferase</keyword>
<reference key="1">
    <citation type="journal article" date="2004" name="Science">
        <title>The Ashbya gossypii genome as a tool for mapping the ancient Saccharomyces cerevisiae genome.</title>
        <authorList>
            <person name="Dietrich F.S."/>
            <person name="Voegeli S."/>
            <person name="Brachat S."/>
            <person name="Lerch A."/>
            <person name="Gates K."/>
            <person name="Steiner S."/>
            <person name="Mohr C."/>
            <person name="Poehlmann R."/>
            <person name="Luedi P."/>
            <person name="Choi S."/>
            <person name="Wing R.A."/>
            <person name="Flavier A."/>
            <person name="Gaffney T.D."/>
            <person name="Philippsen P."/>
        </authorList>
    </citation>
    <scope>NUCLEOTIDE SEQUENCE [LARGE SCALE GENOMIC DNA]</scope>
    <source>
        <strain>ATCC 10895 / CBS 109.51 / FGSC 9923 / NRRL Y-1056</strain>
    </source>
</reference>
<reference key="2">
    <citation type="journal article" date="2013" name="G3 (Bethesda)">
        <title>Genomes of Ashbya fungi isolated from insects reveal four mating-type loci, numerous translocations, lack of transposons, and distinct gene duplications.</title>
        <authorList>
            <person name="Dietrich F.S."/>
            <person name="Voegeli S."/>
            <person name="Kuo S."/>
            <person name="Philippsen P."/>
        </authorList>
    </citation>
    <scope>GENOME REANNOTATION</scope>
    <scope>SEQUENCE REVISION TO 531</scope>
    <source>
        <strain>ATCC 10895 / CBS 109.51 / FGSC 9923 / NRRL Y-1056</strain>
    </source>
</reference>